<sequence length="276" mass="30984">MGCGPSQPAEDRRRVRAPKKGWKEEFKADVSVPHTGENCSPRMEAALTKNTVDIAEGLEQVQMGSLPGTISENSPSPSERNRRVNSDLVTNGLINKPQSLESRERQKSSDILEELIVQGIIQSHSKVFRNGESYDVTLTTTEKPLRKPPSRLKKLKIKKQVKDFTMKDIEEKMEAAEERRKTKEEEIRKRLRSDRLLPSANHSDSAELDGAEVAFAKGLQRVRSAGFEPSDLQGGKPLKRKKSKCDATLIDRNESDESFGVVESDMSYNQADDIVY</sequence>
<feature type="initiator methionine" description="Removed" evidence="1">
    <location>
        <position position="1"/>
    </location>
</feature>
<feature type="chain" id="PRO_0000421693" description="Stathmin domain-containing protein 1">
    <location>
        <begin position="2"/>
        <end position="276"/>
    </location>
</feature>
<feature type="domain" description="SLD" evidence="2">
    <location>
        <begin position="118"/>
        <end position="244"/>
    </location>
</feature>
<feature type="region of interest" description="Disordered" evidence="3">
    <location>
        <begin position="1"/>
        <end position="40"/>
    </location>
</feature>
<feature type="region of interest" description="Disordered" evidence="3">
    <location>
        <begin position="61"/>
        <end position="106"/>
    </location>
</feature>
<feature type="region of interest" description="Disordered" evidence="3">
    <location>
        <begin position="226"/>
        <end position="250"/>
    </location>
</feature>
<feature type="compositionally biased region" description="Polar residues" evidence="3">
    <location>
        <begin position="68"/>
        <end position="78"/>
    </location>
</feature>
<feature type="compositionally biased region" description="Polar residues" evidence="3">
    <location>
        <begin position="87"/>
        <end position="100"/>
    </location>
</feature>
<feature type="lipid moiety-binding region" description="N-myristoyl glycine" evidence="1">
    <location>
        <position position="2"/>
    </location>
</feature>
<gene>
    <name type="primary">STMND1</name>
</gene>
<dbReference type="EMBL" id="AL138740">
    <property type="status" value="NOT_ANNOTATED_CDS"/>
    <property type="molecule type" value="Genomic_DNA"/>
</dbReference>
<dbReference type="EMBL" id="DT932726">
    <property type="status" value="NOT_ANNOTATED_CDS"/>
    <property type="molecule type" value="mRNA"/>
</dbReference>
<dbReference type="CCDS" id="CCDS58997.1"/>
<dbReference type="RefSeq" id="NP_001177695.1">
    <property type="nucleotide sequence ID" value="NM_001190766.2"/>
</dbReference>
<dbReference type="SMR" id="H3BQB6"/>
<dbReference type="FunCoup" id="H3BQB6">
    <property type="interactions" value="45"/>
</dbReference>
<dbReference type="STRING" id="9606.ENSP00000455698"/>
<dbReference type="iPTMnet" id="H3BQB6"/>
<dbReference type="PhosphoSitePlus" id="H3BQB6"/>
<dbReference type="BioMuta" id="STMND1"/>
<dbReference type="MassIVE" id="H3BQB6"/>
<dbReference type="PaxDb" id="9606-ENSP00000455698"/>
<dbReference type="PeptideAtlas" id="H3BQB6"/>
<dbReference type="ProteomicsDB" id="41741"/>
<dbReference type="Antibodypedia" id="77399">
    <property type="antibodies" value="4 antibodies from 4 providers"/>
</dbReference>
<dbReference type="DNASU" id="401236"/>
<dbReference type="Ensembl" id="ENST00000536551.6">
    <property type="protein sequence ID" value="ENSP00000455698.1"/>
    <property type="gene ID" value="ENSG00000230873.9"/>
</dbReference>
<dbReference type="GeneID" id="401236"/>
<dbReference type="KEGG" id="hsa:401236"/>
<dbReference type="MANE-Select" id="ENST00000536551.6">
    <property type="protein sequence ID" value="ENSP00000455698.1"/>
    <property type="RefSeq nucleotide sequence ID" value="NM_001190766.2"/>
    <property type="RefSeq protein sequence ID" value="NP_001177695.1"/>
</dbReference>
<dbReference type="UCSC" id="uc021ymc.1">
    <property type="organism name" value="human"/>
</dbReference>
<dbReference type="AGR" id="HGNC:44668"/>
<dbReference type="CTD" id="401236"/>
<dbReference type="DisGeNET" id="401236"/>
<dbReference type="GeneCards" id="STMND1"/>
<dbReference type="HGNC" id="HGNC:44668">
    <property type="gene designation" value="STMND1"/>
</dbReference>
<dbReference type="HPA" id="ENSG00000230873">
    <property type="expression patterns" value="Tissue enhanced (choroid plexus, fallopian tube, testis)"/>
</dbReference>
<dbReference type="neXtProt" id="NX_H3BQB6"/>
<dbReference type="OpenTargets" id="ENSG00000230873"/>
<dbReference type="VEuPathDB" id="HostDB:ENSG00000230873"/>
<dbReference type="eggNOG" id="ENOG502S3US">
    <property type="taxonomic scope" value="Eukaryota"/>
</dbReference>
<dbReference type="GeneTree" id="ENSGT01030000234597"/>
<dbReference type="HOGENOM" id="CLU_089666_0_0_1"/>
<dbReference type="InParanoid" id="H3BQB6"/>
<dbReference type="OMA" id="APKKGWE"/>
<dbReference type="OrthoDB" id="9940536at2759"/>
<dbReference type="PAN-GO" id="H3BQB6">
    <property type="GO annotations" value="6 GO annotations based on evolutionary models"/>
</dbReference>
<dbReference type="TreeFam" id="TF333434"/>
<dbReference type="PathwayCommons" id="H3BQB6"/>
<dbReference type="BioGRID-ORCS" id="401236">
    <property type="hits" value="7 hits in 1063 CRISPR screens"/>
</dbReference>
<dbReference type="ChiTaRS" id="STMND1">
    <property type="organism name" value="human"/>
</dbReference>
<dbReference type="GenomeRNAi" id="401236"/>
<dbReference type="Pharos" id="H3BQB6">
    <property type="development level" value="Tdark"/>
</dbReference>
<dbReference type="PRO" id="PR:H3BQB6"/>
<dbReference type="Proteomes" id="UP000005640">
    <property type="component" value="Chromosome 6"/>
</dbReference>
<dbReference type="RNAct" id="H3BQB6">
    <property type="molecule type" value="protein"/>
</dbReference>
<dbReference type="Bgee" id="ENSG00000230873">
    <property type="expression patterns" value="Expressed in right uterine tube and 59 other cell types or tissues"/>
</dbReference>
<dbReference type="ExpressionAtlas" id="H3BQB6">
    <property type="expression patterns" value="baseline and differential"/>
</dbReference>
<dbReference type="GO" id="GO:0031110">
    <property type="term" value="P:regulation of microtubule polymerization or depolymerization"/>
    <property type="evidence" value="ECO:0007669"/>
    <property type="project" value="InterPro"/>
</dbReference>
<dbReference type="InterPro" id="IPR000956">
    <property type="entry name" value="Stathmin_fam"/>
</dbReference>
<dbReference type="InterPro" id="IPR036002">
    <property type="entry name" value="Stathmin_sf"/>
</dbReference>
<dbReference type="PANTHER" id="PTHR10104">
    <property type="entry name" value="STATHMIN"/>
    <property type="match status" value="1"/>
</dbReference>
<dbReference type="PANTHER" id="PTHR10104:SF20">
    <property type="entry name" value="STATHMIN DOMAIN-CONTAINING PROTEIN 1"/>
    <property type="match status" value="1"/>
</dbReference>
<dbReference type="Pfam" id="PF00836">
    <property type="entry name" value="Stathmin"/>
    <property type="match status" value="1"/>
</dbReference>
<dbReference type="SUPFAM" id="SSF101494">
    <property type="entry name" value="Stathmin"/>
    <property type="match status" value="1"/>
</dbReference>
<dbReference type="PROSITE" id="PS51663">
    <property type="entry name" value="STATHMIN_3"/>
    <property type="match status" value="1"/>
</dbReference>
<reference key="1">
    <citation type="journal article" date="2003" name="Nature">
        <title>The DNA sequence and analysis of human chromosome 6.</title>
        <authorList>
            <person name="Mungall A.J."/>
            <person name="Palmer S.A."/>
            <person name="Sims S.K."/>
            <person name="Edwards C.A."/>
            <person name="Ashurst J.L."/>
            <person name="Wilming L."/>
            <person name="Jones M.C."/>
            <person name="Horton R."/>
            <person name="Hunt S.E."/>
            <person name="Scott C.E."/>
            <person name="Gilbert J.G.R."/>
            <person name="Clamp M.E."/>
            <person name="Bethel G."/>
            <person name="Milne S."/>
            <person name="Ainscough R."/>
            <person name="Almeida J.P."/>
            <person name="Ambrose K.D."/>
            <person name="Andrews T.D."/>
            <person name="Ashwell R.I.S."/>
            <person name="Babbage A.K."/>
            <person name="Bagguley C.L."/>
            <person name="Bailey J."/>
            <person name="Banerjee R."/>
            <person name="Barker D.J."/>
            <person name="Barlow K.F."/>
            <person name="Bates K."/>
            <person name="Beare D.M."/>
            <person name="Beasley H."/>
            <person name="Beasley O."/>
            <person name="Bird C.P."/>
            <person name="Blakey S.E."/>
            <person name="Bray-Allen S."/>
            <person name="Brook J."/>
            <person name="Brown A.J."/>
            <person name="Brown J.Y."/>
            <person name="Burford D.C."/>
            <person name="Burrill W."/>
            <person name="Burton J."/>
            <person name="Carder C."/>
            <person name="Carter N.P."/>
            <person name="Chapman J.C."/>
            <person name="Clark S.Y."/>
            <person name="Clark G."/>
            <person name="Clee C.M."/>
            <person name="Clegg S."/>
            <person name="Cobley V."/>
            <person name="Collier R.E."/>
            <person name="Collins J.E."/>
            <person name="Colman L.K."/>
            <person name="Corby N.R."/>
            <person name="Coville G.J."/>
            <person name="Culley K.M."/>
            <person name="Dhami P."/>
            <person name="Davies J."/>
            <person name="Dunn M."/>
            <person name="Earthrowl M.E."/>
            <person name="Ellington A.E."/>
            <person name="Evans K.A."/>
            <person name="Faulkner L."/>
            <person name="Francis M.D."/>
            <person name="Frankish A."/>
            <person name="Frankland J."/>
            <person name="French L."/>
            <person name="Garner P."/>
            <person name="Garnett J."/>
            <person name="Ghori M.J."/>
            <person name="Gilby L.M."/>
            <person name="Gillson C.J."/>
            <person name="Glithero R.J."/>
            <person name="Grafham D.V."/>
            <person name="Grant M."/>
            <person name="Gribble S."/>
            <person name="Griffiths C."/>
            <person name="Griffiths M.N.D."/>
            <person name="Hall R."/>
            <person name="Halls K.S."/>
            <person name="Hammond S."/>
            <person name="Harley J.L."/>
            <person name="Hart E.A."/>
            <person name="Heath P.D."/>
            <person name="Heathcott R."/>
            <person name="Holmes S.J."/>
            <person name="Howden P.J."/>
            <person name="Howe K.L."/>
            <person name="Howell G.R."/>
            <person name="Huckle E."/>
            <person name="Humphray S.J."/>
            <person name="Humphries M.D."/>
            <person name="Hunt A.R."/>
            <person name="Johnson C.M."/>
            <person name="Joy A.A."/>
            <person name="Kay M."/>
            <person name="Keenan S.J."/>
            <person name="Kimberley A.M."/>
            <person name="King A."/>
            <person name="Laird G.K."/>
            <person name="Langford C."/>
            <person name="Lawlor S."/>
            <person name="Leongamornlert D.A."/>
            <person name="Leversha M."/>
            <person name="Lloyd C.R."/>
            <person name="Lloyd D.M."/>
            <person name="Loveland J.E."/>
            <person name="Lovell J."/>
            <person name="Martin S."/>
            <person name="Mashreghi-Mohammadi M."/>
            <person name="Maslen G.L."/>
            <person name="Matthews L."/>
            <person name="McCann O.T."/>
            <person name="McLaren S.J."/>
            <person name="McLay K."/>
            <person name="McMurray A."/>
            <person name="Moore M.J.F."/>
            <person name="Mullikin J.C."/>
            <person name="Niblett D."/>
            <person name="Nickerson T."/>
            <person name="Novik K.L."/>
            <person name="Oliver K."/>
            <person name="Overton-Larty E.K."/>
            <person name="Parker A."/>
            <person name="Patel R."/>
            <person name="Pearce A.V."/>
            <person name="Peck A.I."/>
            <person name="Phillimore B.J.C.T."/>
            <person name="Phillips S."/>
            <person name="Plumb R.W."/>
            <person name="Porter K.M."/>
            <person name="Ramsey Y."/>
            <person name="Ranby S.A."/>
            <person name="Rice C.M."/>
            <person name="Ross M.T."/>
            <person name="Searle S.M."/>
            <person name="Sehra H.K."/>
            <person name="Sheridan E."/>
            <person name="Skuce C.D."/>
            <person name="Smith S."/>
            <person name="Smith M."/>
            <person name="Spraggon L."/>
            <person name="Squares S.L."/>
            <person name="Steward C.A."/>
            <person name="Sycamore N."/>
            <person name="Tamlyn-Hall G."/>
            <person name="Tester J."/>
            <person name="Theaker A.J."/>
            <person name="Thomas D.W."/>
            <person name="Thorpe A."/>
            <person name="Tracey A."/>
            <person name="Tromans A."/>
            <person name="Tubby B."/>
            <person name="Wall M."/>
            <person name="Wallis J.M."/>
            <person name="West A.P."/>
            <person name="White S.S."/>
            <person name="Whitehead S.L."/>
            <person name="Whittaker H."/>
            <person name="Wild A."/>
            <person name="Willey D.J."/>
            <person name="Wilmer T.E."/>
            <person name="Wood J.M."/>
            <person name="Wray P.W."/>
            <person name="Wyatt J.C."/>
            <person name="Young L."/>
            <person name="Younger R.M."/>
            <person name="Bentley D.R."/>
            <person name="Coulson A."/>
            <person name="Durbin R.M."/>
            <person name="Hubbard T."/>
            <person name="Sulston J.E."/>
            <person name="Dunham I."/>
            <person name="Rogers J."/>
            <person name="Beck S."/>
        </authorList>
    </citation>
    <scope>NUCLEOTIDE SEQUENCE [LARGE SCALE GENOMIC DNA]</scope>
</reference>
<reference key="2">
    <citation type="submission" date="2005-07" db="EMBL/GenBank/DDBJ databases">
        <title>Exhaustive RT-PCR and sequencing of all novel TWINSCAN predictions in human.</title>
        <authorList>
            <person name="Stevens M."/>
            <person name="Wei C."/>
            <person name="Gross S.S."/>
            <person name="McPherson J."/>
            <person name="Brent M.R."/>
        </authorList>
    </citation>
    <scope>NUCLEOTIDE SEQUENCE [LARGE SCALE MRNA] OF 45-158</scope>
</reference>
<keyword id="KW-0449">Lipoprotein</keyword>
<keyword id="KW-0519">Myristate</keyword>
<keyword id="KW-1267">Proteomics identification</keyword>
<keyword id="KW-1185">Reference proteome</keyword>
<accession>H3BQB6</accession>
<evidence type="ECO:0000255" key="1"/>
<evidence type="ECO:0000255" key="2">
    <source>
        <dbReference type="PROSITE-ProRule" id="PRU00998"/>
    </source>
</evidence>
<evidence type="ECO:0000256" key="3">
    <source>
        <dbReference type="SAM" id="MobiDB-lite"/>
    </source>
</evidence>
<organism>
    <name type="scientific">Homo sapiens</name>
    <name type="common">Human</name>
    <dbReference type="NCBI Taxonomy" id="9606"/>
    <lineage>
        <taxon>Eukaryota</taxon>
        <taxon>Metazoa</taxon>
        <taxon>Chordata</taxon>
        <taxon>Craniata</taxon>
        <taxon>Vertebrata</taxon>
        <taxon>Euteleostomi</taxon>
        <taxon>Mammalia</taxon>
        <taxon>Eutheria</taxon>
        <taxon>Euarchontoglires</taxon>
        <taxon>Primates</taxon>
        <taxon>Haplorrhini</taxon>
        <taxon>Catarrhini</taxon>
        <taxon>Hominidae</taxon>
        <taxon>Homo</taxon>
    </lineage>
</organism>
<protein>
    <recommendedName>
        <fullName>Stathmin domain-containing protein 1</fullName>
    </recommendedName>
</protein>
<proteinExistence type="evidence at protein level"/>
<name>STMD1_HUMAN</name>